<feature type="chain" id="PRO_0000073425" description="ATP synthase gamma chain">
    <location>
        <begin position="1"/>
        <end position="287"/>
    </location>
</feature>
<gene>
    <name evidence="1" type="primary">atpG</name>
    <name type="ordered locus">PD_0429</name>
</gene>
<accession>Q87E89</accession>
<evidence type="ECO:0000255" key="1">
    <source>
        <dbReference type="HAMAP-Rule" id="MF_00815"/>
    </source>
</evidence>
<name>ATPG_XYLFT</name>
<proteinExistence type="inferred from homology"/>
<keyword id="KW-0066">ATP synthesis</keyword>
<keyword id="KW-0997">Cell inner membrane</keyword>
<keyword id="KW-1003">Cell membrane</keyword>
<keyword id="KW-0139">CF(1)</keyword>
<keyword id="KW-0375">Hydrogen ion transport</keyword>
<keyword id="KW-0406">Ion transport</keyword>
<keyword id="KW-0472">Membrane</keyword>
<keyword id="KW-1185">Reference proteome</keyword>
<keyword id="KW-0813">Transport</keyword>
<dbReference type="EMBL" id="AE009442">
    <property type="protein sequence ID" value="AAO28308.1"/>
    <property type="molecule type" value="Genomic_DNA"/>
</dbReference>
<dbReference type="RefSeq" id="WP_004090070.1">
    <property type="nucleotide sequence ID" value="NC_004556.1"/>
</dbReference>
<dbReference type="SMR" id="Q87E89"/>
<dbReference type="KEGG" id="xft:PD_0429"/>
<dbReference type="HOGENOM" id="CLU_050669_0_1_6"/>
<dbReference type="Proteomes" id="UP000002516">
    <property type="component" value="Chromosome"/>
</dbReference>
<dbReference type="GO" id="GO:0005886">
    <property type="term" value="C:plasma membrane"/>
    <property type="evidence" value="ECO:0007669"/>
    <property type="project" value="UniProtKB-SubCell"/>
</dbReference>
<dbReference type="GO" id="GO:0045259">
    <property type="term" value="C:proton-transporting ATP synthase complex"/>
    <property type="evidence" value="ECO:0007669"/>
    <property type="project" value="UniProtKB-KW"/>
</dbReference>
<dbReference type="GO" id="GO:0005524">
    <property type="term" value="F:ATP binding"/>
    <property type="evidence" value="ECO:0007669"/>
    <property type="project" value="UniProtKB-UniRule"/>
</dbReference>
<dbReference type="GO" id="GO:0046933">
    <property type="term" value="F:proton-transporting ATP synthase activity, rotational mechanism"/>
    <property type="evidence" value="ECO:0007669"/>
    <property type="project" value="UniProtKB-UniRule"/>
</dbReference>
<dbReference type="GO" id="GO:0042777">
    <property type="term" value="P:proton motive force-driven plasma membrane ATP synthesis"/>
    <property type="evidence" value="ECO:0007669"/>
    <property type="project" value="UniProtKB-UniRule"/>
</dbReference>
<dbReference type="CDD" id="cd12151">
    <property type="entry name" value="F1-ATPase_gamma"/>
    <property type="match status" value="1"/>
</dbReference>
<dbReference type="FunFam" id="1.10.287.80:FF:000005">
    <property type="entry name" value="ATP synthase gamma chain"/>
    <property type="match status" value="1"/>
</dbReference>
<dbReference type="Gene3D" id="3.40.1380.10">
    <property type="match status" value="1"/>
</dbReference>
<dbReference type="Gene3D" id="1.10.287.80">
    <property type="entry name" value="ATP synthase, gamma subunit, helix hairpin domain"/>
    <property type="match status" value="1"/>
</dbReference>
<dbReference type="HAMAP" id="MF_00815">
    <property type="entry name" value="ATP_synth_gamma_bact"/>
    <property type="match status" value="1"/>
</dbReference>
<dbReference type="InterPro" id="IPR035968">
    <property type="entry name" value="ATP_synth_F1_ATPase_gsu"/>
</dbReference>
<dbReference type="InterPro" id="IPR000131">
    <property type="entry name" value="ATP_synth_F1_gsu"/>
</dbReference>
<dbReference type="InterPro" id="IPR023632">
    <property type="entry name" value="ATP_synth_F1_gsu_CS"/>
</dbReference>
<dbReference type="NCBIfam" id="TIGR01146">
    <property type="entry name" value="ATPsyn_F1gamma"/>
    <property type="match status" value="1"/>
</dbReference>
<dbReference type="NCBIfam" id="NF004144">
    <property type="entry name" value="PRK05621.1-1"/>
    <property type="match status" value="1"/>
</dbReference>
<dbReference type="PANTHER" id="PTHR11693">
    <property type="entry name" value="ATP SYNTHASE GAMMA CHAIN"/>
    <property type="match status" value="1"/>
</dbReference>
<dbReference type="PANTHER" id="PTHR11693:SF22">
    <property type="entry name" value="ATP SYNTHASE SUBUNIT GAMMA, MITOCHONDRIAL"/>
    <property type="match status" value="1"/>
</dbReference>
<dbReference type="Pfam" id="PF00231">
    <property type="entry name" value="ATP-synt"/>
    <property type="match status" value="1"/>
</dbReference>
<dbReference type="PRINTS" id="PR00126">
    <property type="entry name" value="ATPASEGAMMA"/>
</dbReference>
<dbReference type="SUPFAM" id="SSF52943">
    <property type="entry name" value="ATP synthase (F1-ATPase), gamma subunit"/>
    <property type="match status" value="1"/>
</dbReference>
<dbReference type="PROSITE" id="PS00153">
    <property type="entry name" value="ATPASE_GAMMA"/>
    <property type="match status" value="1"/>
</dbReference>
<sequence>MASGREIKSKIKSVQNTRKVTRALEMVSASKIRKAQEQMKISRPYAQAMKQMIGHLAQANTEYLHPFLIAHKQVKRIGYIVISSDRGLAGGLNNNLFRKMLGEMHQWQDNGAEVDIVTIGQKASVFFRRIKVNILGSVTHLGDTPRLEQLIGVIKVMLDAYTEEKLDRVYLVYNHFINTMVQKASFDQLLPLLAAKDKVAHHDWDYLYEPDAATVLEHVMTRYIESLVYQAMLENIASEHAARMVAMKAASDNANKLIGTLQLVYNKARQAAITQEISEIVGGAAAV</sequence>
<reference key="1">
    <citation type="journal article" date="2003" name="J. Bacteriol.">
        <title>Comparative analyses of the complete genome sequences of Pierce's disease and citrus variegated chlorosis strains of Xylella fastidiosa.</title>
        <authorList>
            <person name="Van Sluys M.A."/>
            <person name="de Oliveira M.C."/>
            <person name="Monteiro-Vitorello C.B."/>
            <person name="Miyaki C.Y."/>
            <person name="Furlan L.R."/>
            <person name="Camargo L.E.A."/>
            <person name="da Silva A.C.R."/>
            <person name="Moon D.H."/>
            <person name="Takita M.A."/>
            <person name="Lemos E.G.M."/>
            <person name="Machado M.A."/>
            <person name="Ferro M.I.T."/>
            <person name="da Silva F.R."/>
            <person name="Goldman M.H.S."/>
            <person name="Goldman G.H."/>
            <person name="Lemos M.V.F."/>
            <person name="El-Dorry H."/>
            <person name="Tsai S.M."/>
            <person name="Carrer H."/>
            <person name="Carraro D.M."/>
            <person name="de Oliveira R.C."/>
            <person name="Nunes L.R."/>
            <person name="Siqueira W.J."/>
            <person name="Coutinho L.L."/>
            <person name="Kimura E.T."/>
            <person name="Ferro E.S."/>
            <person name="Harakava R."/>
            <person name="Kuramae E.E."/>
            <person name="Marino C.L."/>
            <person name="Giglioti E."/>
            <person name="Abreu I.L."/>
            <person name="Alves L.M.C."/>
            <person name="do Amaral A.M."/>
            <person name="Baia G.S."/>
            <person name="Blanco S.R."/>
            <person name="Brito M.S."/>
            <person name="Cannavan F.S."/>
            <person name="Celestino A.V."/>
            <person name="da Cunha A.F."/>
            <person name="Fenille R.C."/>
            <person name="Ferro J.A."/>
            <person name="Formighieri E.F."/>
            <person name="Kishi L.T."/>
            <person name="Leoni S.G."/>
            <person name="Oliveira A.R."/>
            <person name="Rosa V.E. Jr."/>
            <person name="Sassaki F.T."/>
            <person name="Sena J.A.D."/>
            <person name="de Souza A.A."/>
            <person name="Truffi D."/>
            <person name="Tsukumo F."/>
            <person name="Yanai G.M."/>
            <person name="Zaros L.G."/>
            <person name="Civerolo E.L."/>
            <person name="Simpson A.J.G."/>
            <person name="Almeida N.F. Jr."/>
            <person name="Setubal J.C."/>
            <person name="Kitajima J.P."/>
        </authorList>
    </citation>
    <scope>NUCLEOTIDE SEQUENCE [LARGE SCALE GENOMIC DNA]</scope>
    <source>
        <strain>Temecula1 / ATCC 700964</strain>
    </source>
</reference>
<organism>
    <name type="scientific">Xylella fastidiosa (strain Temecula1 / ATCC 700964)</name>
    <dbReference type="NCBI Taxonomy" id="183190"/>
    <lineage>
        <taxon>Bacteria</taxon>
        <taxon>Pseudomonadati</taxon>
        <taxon>Pseudomonadota</taxon>
        <taxon>Gammaproteobacteria</taxon>
        <taxon>Lysobacterales</taxon>
        <taxon>Lysobacteraceae</taxon>
        <taxon>Xylella</taxon>
    </lineage>
</organism>
<comment type="function">
    <text evidence="1">Produces ATP from ADP in the presence of a proton gradient across the membrane. The gamma chain is believed to be important in regulating ATPase activity and the flow of protons through the CF(0) complex.</text>
</comment>
<comment type="subunit">
    <text evidence="1">F-type ATPases have 2 components, CF(1) - the catalytic core - and CF(0) - the membrane proton channel. CF(1) has five subunits: alpha(3), beta(3), gamma(1), delta(1), epsilon(1). CF(0) has three main subunits: a, b and c.</text>
</comment>
<comment type="subcellular location">
    <subcellularLocation>
        <location evidence="1">Cell inner membrane</location>
        <topology evidence="1">Peripheral membrane protein</topology>
    </subcellularLocation>
</comment>
<comment type="similarity">
    <text evidence="1">Belongs to the ATPase gamma chain family.</text>
</comment>
<protein>
    <recommendedName>
        <fullName evidence="1">ATP synthase gamma chain</fullName>
    </recommendedName>
    <alternativeName>
        <fullName evidence="1">ATP synthase F1 sector gamma subunit</fullName>
    </alternativeName>
    <alternativeName>
        <fullName evidence="1">F-ATPase gamma subunit</fullName>
    </alternativeName>
</protein>